<sequence>MKLDKYAVGQRYAKALFSLAEQEQQFESIHDEIQALETIFNDNPKLGTVLTDTTLSGLKQRNLLESLSNDFSTLMQHFLSLVFDYQRMAEMPYIIAAYEDLYDQHKGIAHAKVTSAVALDDDQLAKISQSFAKREGLNEVLIESVVDPDIIGGIVLESNHKVIDGSVKHGLDQIKSLLLK</sequence>
<protein>
    <recommendedName>
        <fullName evidence="1">ATP synthase subunit delta</fullName>
    </recommendedName>
    <alternativeName>
        <fullName evidence="1">ATP synthase F(1) sector subunit delta</fullName>
    </alternativeName>
    <alternativeName>
        <fullName evidence="1">F-type ATPase subunit delta</fullName>
        <shortName evidence="1">F-ATPase subunit delta</shortName>
    </alternativeName>
</protein>
<comment type="function">
    <text evidence="1">F(1)F(0) ATP synthase produces ATP from ADP in the presence of a proton or sodium gradient. F-type ATPases consist of two structural domains, F(1) containing the extramembraneous catalytic core and F(0) containing the membrane proton channel, linked together by a central stalk and a peripheral stalk. During catalysis, ATP synthesis in the catalytic domain of F(1) is coupled via a rotary mechanism of the central stalk subunits to proton translocation.</text>
</comment>
<comment type="function">
    <text evidence="1">This protein is part of the stalk that links CF(0) to CF(1). It either transmits conformational changes from CF(0) to CF(1) or is implicated in proton conduction.</text>
</comment>
<comment type="subunit">
    <text evidence="1">F-type ATPases have 2 components, F(1) - the catalytic core - and F(0) - the membrane proton channel. F(1) has five subunits: alpha(3), beta(3), gamma(1), delta(1), epsilon(1). F(0) has three main subunits: a(1), b(2) and c(10-14). The alpha and beta chains form an alternating ring which encloses part of the gamma chain. F(1) is attached to F(0) by a central stalk formed by the gamma and epsilon chains, while a peripheral stalk is formed by the delta and b chains.</text>
</comment>
<comment type="subcellular location">
    <subcellularLocation>
        <location evidence="1">Cell membrane</location>
        <topology evidence="1">Peripheral membrane protein</topology>
    </subcellularLocation>
</comment>
<comment type="similarity">
    <text evidence="1">Belongs to the ATPase delta chain family.</text>
</comment>
<accession>Q38WK2</accession>
<gene>
    <name evidence="1" type="primary">atpH</name>
    <name type="ordered locus">LCA_1129</name>
</gene>
<organism>
    <name type="scientific">Latilactobacillus sakei subsp. sakei (strain 23K)</name>
    <name type="common">Lactobacillus sakei subsp. sakei</name>
    <dbReference type="NCBI Taxonomy" id="314315"/>
    <lineage>
        <taxon>Bacteria</taxon>
        <taxon>Bacillati</taxon>
        <taxon>Bacillota</taxon>
        <taxon>Bacilli</taxon>
        <taxon>Lactobacillales</taxon>
        <taxon>Lactobacillaceae</taxon>
        <taxon>Latilactobacillus</taxon>
    </lineage>
</organism>
<feature type="chain" id="PRO_0000371013" description="ATP synthase subunit delta">
    <location>
        <begin position="1"/>
        <end position="180"/>
    </location>
</feature>
<name>ATPD_LATSS</name>
<dbReference type="EMBL" id="CR936503">
    <property type="protein sequence ID" value="CAI55430.1"/>
    <property type="molecule type" value="Genomic_DNA"/>
</dbReference>
<dbReference type="RefSeq" id="WP_011374828.1">
    <property type="nucleotide sequence ID" value="NC_007576.1"/>
</dbReference>
<dbReference type="SMR" id="Q38WK2"/>
<dbReference type="STRING" id="314315.LCA_1129"/>
<dbReference type="GeneID" id="57133986"/>
<dbReference type="KEGG" id="lsa:LCA_1129"/>
<dbReference type="eggNOG" id="COG0712">
    <property type="taxonomic scope" value="Bacteria"/>
</dbReference>
<dbReference type="HOGENOM" id="CLU_085114_4_1_9"/>
<dbReference type="OrthoDB" id="9786633at2"/>
<dbReference type="Proteomes" id="UP000002707">
    <property type="component" value="Chromosome"/>
</dbReference>
<dbReference type="GO" id="GO:0005886">
    <property type="term" value="C:plasma membrane"/>
    <property type="evidence" value="ECO:0007669"/>
    <property type="project" value="UniProtKB-SubCell"/>
</dbReference>
<dbReference type="GO" id="GO:0045259">
    <property type="term" value="C:proton-transporting ATP synthase complex"/>
    <property type="evidence" value="ECO:0007669"/>
    <property type="project" value="UniProtKB-KW"/>
</dbReference>
<dbReference type="GO" id="GO:0046933">
    <property type="term" value="F:proton-transporting ATP synthase activity, rotational mechanism"/>
    <property type="evidence" value="ECO:0007669"/>
    <property type="project" value="UniProtKB-UniRule"/>
</dbReference>
<dbReference type="Gene3D" id="1.10.520.20">
    <property type="entry name" value="N-terminal domain of the delta subunit of the F1F0-ATP synthase"/>
    <property type="match status" value="1"/>
</dbReference>
<dbReference type="HAMAP" id="MF_01416">
    <property type="entry name" value="ATP_synth_delta_bact"/>
    <property type="match status" value="1"/>
</dbReference>
<dbReference type="InterPro" id="IPR026015">
    <property type="entry name" value="ATP_synth_OSCP/delta_N_sf"/>
</dbReference>
<dbReference type="InterPro" id="IPR020781">
    <property type="entry name" value="ATPase_OSCP/d_CS"/>
</dbReference>
<dbReference type="InterPro" id="IPR000711">
    <property type="entry name" value="ATPase_OSCP/dsu"/>
</dbReference>
<dbReference type="NCBIfam" id="TIGR01145">
    <property type="entry name" value="ATP_synt_delta"/>
    <property type="match status" value="1"/>
</dbReference>
<dbReference type="PANTHER" id="PTHR11910">
    <property type="entry name" value="ATP SYNTHASE DELTA CHAIN"/>
    <property type="match status" value="1"/>
</dbReference>
<dbReference type="Pfam" id="PF00213">
    <property type="entry name" value="OSCP"/>
    <property type="match status" value="1"/>
</dbReference>
<dbReference type="PRINTS" id="PR00125">
    <property type="entry name" value="ATPASEDELTA"/>
</dbReference>
<dbReference type="SUPFAM" id="SSF47928">
    <property type="entry name" value="N-terminal domain of the delta subunit of the F1F0-ATP synthase"/>
    <property type="match status" value="1"/>
</dbReference>
<dbReference type="PROSITE" id="PS00389">
    <property type="entry name" value="ATPASE_DELTA"/>
    <property type="match status" value="1"/>
</dbReference>
<reference key="1">
    <citation type="journal article" date="2005" name="Nat. Biotechnol.">
        <title>The complete genome sequence of the meat-borne lactic acid bacterium Lactobacillus sakei 23K.</title>
        <authorList>
            <person name="Chaillou S."/>
            <person name="Champomier-Verges M.-C."/>
            <person name="Cornet M."/>
            <person name="Crutz-Le Coq A.-M."/>
            <person name="Dudez A.-M."/>
            <person name="Martin V."/>
            <person name="Beaufils S."/>
            <person name="Darbon-Rongere E."/>
            <person name="Bossy R."/>
            <person name="Loux V."/>
            <person name="Zagorec M."/>
        </authorList>
    </citation>
    <scope>NUCLEOTIDE SEQUENCE [LARGE SCALE GENOMIC DNA]</scope>
    <source>
        <strain>23K</strain>
    </source>
</reference>
<keyword id="KW-0066">ATP synthesis</keyword>
<keyword id="KW-1003">Cell membrane</keyword>
<keyword id="KW-0139">CF(1)</keyword>
<keyword id="KW-0375">Hydrogen ion transport</keyword>
<keyword id="KW-0406">Ion transport</keyword>
<keyword id="KW-0472">Membrane</keyword>
<keyword id="KW-1185">Reference proteome</keyword>
<keyword id="KW-0813">Transport</keyword>
<evidence type="ECO:0000255" key="1">
    <source>
        <dbReference type="HAMAP-Rule" id="MF_01416"/>
    </source>
</evidence>
<proteinExistence type="inferred from homology"/>